<organism>
    <name type="scientific">Mycolicibacterium vanbaalenii (strain DSM 7251 / JCM 13017 / BCRC 16820 / KCTC 9966 / NRRL B-24157 / PYR-1)</name>
    <name type="common">Mycobacterium vanbaalenii</name>
    <dbReference type="NCBI Taxonomy" id="350058"/>
    <lineage>
        <taxon>Bacteria</taxon>
        <taxon>Bacillati</taxon>
        <taxon>Actinomycetota</taxon>
        <taxon>Actinomycetes</taxon>
        <taxon>Mycobacteriales</taxon>
        <taxon>Mycobacteriaceae</taxon>
        <taxon>Mycolicibacterium</taxon>
    </lineage>
</organism>
<sequence length="86" mass="9436">MANIKSQQKRILTNERRRLRNKSVKSSLHTAVRGFRAAVEAGDKDKAGELLASTSRKLDKAASKGVIHKNQAANRKSALAKALQKI</sequence>
<feature type="chain" id="PRO_1000014612" description="Small ribosomal subunit protein bS20">
    <location>
        <begin position="1"/>
        <end position="86"/>
    </location>
</feature>
<protein>
    <recommendedName>
        <fullName evidence="1">Small ribosomal subunit protein bS20</fullName>
    </recommendedName>
    <alternativeName>
        <fullName evidence="2">30S ribosomal protein S20</fullName>
    </alternativeName>
</protein>
<reference key="1">
    <citation type="submission" date="2006-12" db="EMBL/GenBank/DDBJ databases">
        <title>Complete sequence of Mycobacterium vanbaalenii PYR-1.</title>
        <authorList>
            <consortium name="US DOE Joint Genome Institute"/>
            <person name="Copeland A."/>
            <person name="Lucas S."/>
            <person name="Lapidus A."/>
            <person name="Barry K."/>
            <person name="Detter J.C."/>
            <person name="Glavina del Rio T."/>
            <person name="Hammon N."/>
            <person name="Israni S."/>
            <person name="Dalin E."/>
            <person name="Tice H."/>
            <person name="Pitluck S."/>
            <person name="Singan V."/>
            <person name="Schmutz J."/>
            <person name="Larimer F."/>
            <person name="Land M."/>
            <person name="Hauser L."/>
            <person name="Kyrpides N."/>
            <person name="Anderson I.J."/>
            <person name="Miller C."/>
            <person name="Richardson P."/>
        </authorList>
    </citation>
    <scope>NUCLEOTIDE SEQUENCE [LARGE SCALE GENOMIC DNA]</scope>
    <source>
        <strain>DSM 7251 / JCM 13017 / BCRC 16820 / KCTC 9966 / NRRL B-24157 / PYR-1</strain>
    </source>
</reference>
<evidence type="ECO:0000255" key="1">
    <source>
        <dbReference type="HAMAP-Rule" id="MF_00500"/>
    </source>
</evidence>
<evidence type="ECO:0000305" key="2"/>
<gene>
    <name evidence="1" type="primary">rpsT</name>
    <name type="ordered locus">Mvan_3912</name>
</gene>
<comment type="function">
    <text evidence="1">Binds directly to 16S ribosomal RNA.</text>
</comment>
<comment type="similarity">
    <text evidence="1">Belongs to the bacterial ribosomal protein bS20 family.</text>
</comment>
<name>RS20_MYCVP</name>
<keyword id="KW-0687">Ribonucleoprotein</keyword>
<keyword id="KW-0689">Ribosomal protein</keyword>
<keyword id="KW-0694">RNA-binding</keyword>
<keyword id="KW-0699">rRNA-binding</keyword>
<accession>A1TBY9</accession>
<dbReference type="EMBL" id="CP000511">
    <property type="protein sequence ID" value="ABM14689.1"/>
    <property type="molecule type" value="Genomic_DNA"/>
</dbReference>
<dbReference type="RefSeq" id="WP_011781070.1">
    <property type="nucleotide sequence ID" value="NZ_JACKSD010000267.1"/>
</dbReference>
<dbReference type="SMR" id="A1TBY9"/>
<dbReference type="STRING" id="350058.Mvan_3912"/>
<dbReference type="KEGG" id="mva:Mvan_3912"/>
<dbReference type="eggNOG" id="COG0268">
    <property type="taxonomic scope" value="Bacteria"/>
</dbReference>
<dbReference type="HOGENOM" id="CLU_160655_0_1_11"/>
<dbReference type="Proteomes" id="UP000009159">
    <property type="component" value="Chromosome"/>
</dbReference>
<dbReference type="GO" id="GO:0005829">
    <property type="term" value="C:cytosol"/>
    <property type="evidence" value="ECO:0007669"/>
    <property type="project" value="TreeGrafter"/>
</dbReference>
<dbReference type="GO" id="GO:0015935">
    <property type="term" value="C:small ribosomal subunit"/>
    <property type="evidence" value="ECO:0007669"/>
    <property type="project" value="TreeGrafter"/>
</dbReference>
<dbReference type="GO" id="GO:0070181">
    <property type="term" value="F:small ribosomal subunit rRNA binding"/>
    <property type="evidence" value="ECO:0007669"/>
    <property type="project" value="TreeGrafter"/>
</dbReference>
<dbReference type="GO" id="GO:0003735">
    <property type="term" value="F:structural constituent of ribosome"/>
    <property type="evidence" value="ECO:0007669"/>
    <property type="project" value="InterPro"/>
</dbReference>
<dbReference type="GO" id="GO:0006412">
    <property type="term" value="P:translation"/>
    <property type="evidence" value="ECO:0007669"/>
    <property type="project" value="UniProtKB-UniRule"/>
</dbReference>
<dbReference type="FunFam" id="1.20.58.110:FF:000001">
    <property type="entry name" value="30S ribosomal protein S20"/>
    <property type="match status" value="1"/>
</dbReference>
<dbReference type="Gene3D" id="1.20.58.110">
    <property type="entry name" value="Ribosomal protein S20"/>
    <property type="match status" value="1"/>
</dbReference>
<dbReference type="HAMAP" id="MF_00500">
    <property type="entry name" value="Ribosomal_bS20"/>
    <property type="match status" value="1"/>
</dbReference>
<dbReference type="InterPro" id="IPR002583">
    <property type="entry name" value="Ribosomal_bS20"/>
</dbReference>
<dbReference type="InterPro" id="IPR036510">
    <property type="entry name" value="Ribosomal_bS20_sf"/>
</dbReference>
<dbReference type="NCBIfam" id="TIGR00029">
    <property type="entry name" value="S20"/>
    <property type="match status" value="1"/>
</dbReference>
<dbReference type="PANTHER" id="PTHR33398">
    <property type="entry name" value="30S RIBOSOMAL PROTEIN S20"/>
    <property type="match status" value="1"/>
</dbReference>
<dbReference type="PANTHER" id="PTHR33398:SF1">
    <property type="entry name" value="SMALL RIBOSOMAL SUBUNIT PROTEIN BS20C"/>
    <property type="match status" value="1"/>
</dbReference>
<dbReference type="Pfam" id="PF01649">
    <property type="entry name" value="Ribosomal_S20p"/>
    <property type="match status" value="1"/>
</dbReference>
<dbReference type="SUPFAM" id="SSF46992">
    <property type="entry name" value="Ribosomal protein S20"/>
    <property type="match status" value="1"/>
</dbReference>
<proteinExistence type="inferred from homology"/>